<gene>
    <name evidence="1" type="primary">yejL</name>
    <name type="ordered locus">SeHA_C2464</name>
</gene>
<proteinExistence type="inferred from homology"/>
<name>YEJL_SALHS</name>
<evidence type="ECO:0000255" key="1">
    <source>
        <dbReference type="HAMAP-Rule" id="MF_00816"/>
    </source>
</evidence>
<organism>
    <name type="scientific">Salmonella heidelberg (strain SL476)</name>
    <dbReference type="NCBI Taxonomy" id="454169"/>
    <lineage>
        <taxon>Bacteria</taxon>
        <taxon>Pseudomonadati</taxon>
        <taxon>Pseudomonadota</taxon>
        <taxon>Gammaproteobacteria</taxon>
        <taxon>Enterobacterales</taxon>
        <taxon>Enterobacteriaceae</taxon>
        <taxon>Salmonella</taxon>
    </lineage>
</organism>
<sequence length="75" mass="8231">MPQLSRYSDEHVEQLLSELLSVLEKHKAPTDLSLMVLGNMVTNLINTSVAPAQRQAIANSFARALQSSISEDNAH</sequence>
<comment type="similarity">
    <text evidence="1">Belongs to the UPF0352 family.</text>
</comment>
<protein>
    <recommendedName>
        <fullName evidence="1">UPF0352 protein YejL</fullName>
    </recommendedName>
</protein>
<dbReference type="EMBL" id="CP001120">
    <property type="protein sequence ID" value="ACF69769.1"/>
    <property type="molecule type" value="Genomic_DNA"/>
</dbReference>
<dbReference type="RefSeq" id="WP_001135904.1">
    <property type="nucleotide sequence ID" value="NC_011083.1"/>
</dbReference>
<dbReference type="SMR" id="B4TAQ1"/>
<dbReference type="KEGG" id="seh:SeHA_C2464"/>
<dbReference type="HOGENOM" id="CLU_175457_0_0_6"/>
<dbReference type="Proteomes" id="UP000001866">
    <property type="component" value="Chromosome"/>
</dbReference>
<dbReference type="Gene3D" id="1.10.3390.10">
    <property type="entry name" value="YejL-like"/>
    <property type="match status" value="1"/>
</dbReference>
<dbReference type="HAMAP" id="MF_00816">
    <property type="entry name" value="UPF0352"/>
    <property type="match status" value="1"/>
</dbReference>
<dbReference type="InterPro" id="IPR009857">
    <property type="entry name" value="UPF0352"/>
</dbReference>
<dbReference type="InterPro" id="IPR023202">
    <property type="entry name" value="YejL_sf"/>
</dbReference>
<dbReference type="NCBIfam" id="NF010242">
    <property type="entry name" value="PRK13689.1"/>
    <property type="match status" value="1"/>
</dbReference>
<dbReference type="Pfam" id="PF07208">
    <property type="entry name" value="DUF1414"/>
    <property type="match status" value="1"/>
</dbReference>
<dbReference type="PIRSF" id="PIRSF006188">
    <property type="entry name" value="UCP006188"/>
    <property type="match status" value="1"/>
</dbReference>
<dbReference type="SUPFAM" id="SSF158651">
    <property type="entry name" value="YejL-like"/>
    <property type="match status" value="1"/>
</dbReference>
<accession>B4TAQ1</accession>
<reference key="1">
    <citation type="journal article" date="2011" name="J. Bacteriol.">
        <title>Comparative genomics of 28 Salmonella enterica isolates: evidence for CRISPR-mediated adaptive sublineage evolution.</title>
        <authorList>
            <person name="Fricke W.F."/>
            <person name="Mammel M.K."/>
            <person name="McDermott P.F."/>
            <person name="Tartera C."/>
            <person name="White D.G."/>
            <person name="Leclerc J.E."/>
            <person name="Ravel J."/>
            <person name="Cebula T.A."/>
        </authorList>
    </citation>
    <scope>NUCLEOTIDE SEQUENCE [LARGE SCALE GENOMIC DNA]</scope>
    <source>
        <strain>SL476</strain>
    </source>
</reference>
<feature type="chain" id="PRO_1000199597" description="UPF0352 protein YejL">
    <location>
        <begin position="1"/>
        <end position="75"/>
    </location>
</feature>